<keyword id="KW-0687">Ribonucleoprotein</keyword>
<keyword id="KW-0689">Ribosomal protein</keyword>
<keyword id="KW-0694">RNA-binding</keyword>
<keyword id="KW-0699">rRNA-binding</keyword>
<keyword id="KW-0820">tRNA-binding</keyword>
<reference key="1">
    <citation type="submission" date="2002-12" db="EMBL/GenBank/DDBJ databases">
        <title>Complete genome sequence of Vibrio vulnificus CMCP6.</title>
        <authorList>
            <person name="Rhee J.H."/>
            <person name="Kim S.Y."/>
            <person name="Chung S.S."/>
            <person name="Kim J.J."/>
            <person name="Moon Y.H."/>
            <person name="Jeong H."/>
            <person name="Choy H.E."/>
        </authorList>
    </citation>
    <scope>NUCLEOTIDE SEQUENCE [LARGE SCALE GENOMIC DNA]</scope>
    <source>
        <strain>CMCP6</strain>
    </source>
</reference>
<name>RS7_VIBVU</name>
<evidence type="ECO:0000255" key="1">
    <source>
        <dbReference type="HAMAP-Rule" id="MF_00480"/>
    </source>
</evidence>
<evidence type="ECO:0000305" key="2"/>
<proteinExistence type="inferred from homology"/>
<dbReference type="EMBL" id="AE016795">
    <property type="protein sequence ID" value="AAO09791.1"/>
    <property type="molecule type" value="Genomic_DNA"/>
</dbReference>
<dbReference type="RefSeq" id="WP_011079316.1">
    <property type="nucleotide sequence ID" value="NC_004459.3"/>
</dbReference>
<dbReference type="SMR" id="Q8DCQ9"/>
<dbReference type="GeneID" id="95678941"/>
<dbReference type="KEGG" id="vvu:VV1_1337"/>
<dbReference type="HOGENOM" id="CLU_072226_1_1_6"/>
<dbReference type="Proteomes" id="UP000002275">
    <property type="component" value="Chromosome 1"/>
</dbReference>
<dbReference type="GO" id="GO:0015935">
    <property type="term" value="C:small ribosomal subunit"/>
    <property type="evidence" value="ECO:0007669"/>
    <property type="project" value="InterPro"/>
</dbReference>
<dbReference type="GO" id="GO:0019843">
    <property type="term" value="F:rRNA binding"/>
    <property type="evidence" value="ECO:0007669"/>
    <property type="project" value="UniProtKB-UniRule"/>
</dbReference>
<dbReference type="GO" id="GO:0003735">
    <property type="term" value="F:structural constituent of ribosome"/>
    <property type="evidence" value="ECO:0007669"/>
    <property type="project" value="InterPro"/>
</dbReference>
<dbReference type="GO" id="GO:0000049">
    <property type="term" value="F:tRNA binding"/>
    <property type="evidence" value="ECO:0007669"/>
    <property type="project" value="UniProtKB-UniRule"/>
</dbReference>
<dbReference type="GO" id="GO:0006412">
    <property type="term" value="P:translation"/>
    <property type="evidence" value="ECO:0007669"/>
    <property type="project" value="UniProtKB-UniRule"/>
</dbReference>
<dbReference type="CDD" id="cd14869">
    <property type="entry name" value="uS7_Bacteria"/>
    <property type="match status" value="1"/>
</dbReference>
<dbReference type="FunFam" id="1.10.455.10:FF:000001">
    <property type="entry name" value="30S ribosomal protein S7"/>
    <property type="match status" value="1"/>
</dbReference>
<dbReference type="Gene3D" id="1.10.455.10">
    <property type="entry name" value="Ribosomal protein S7 domain"/>
    <property type="match status" value="1"/>
</dbReference>
<dbReference type="HAMAP" id="MF_00480_B">
    <property type="entry name" value="Ribosomal_uS7_B"/>
    <property type="match status" value="1"/>
</dbReference>
<dbReference type="InterPro" id="IPR000235">
    <property type="entry name" value="Ribosomal_uS7"/>
</dbReference>
<dbReference type="InterPro" id="IPR005717">
    <property type="entry name" value="Ribosomal_uS7_bac/org-type"/>
</dbReference>
<dbReference type="InterPro" id="IPR020606">
    <property type="entry name" value="Ribosomal_uS7_CS"/>
</dbReference>
<dbReference type="InterPro" id="IPR023798">
    <property type="entry name" value="Ribosomal_uS7_dom"/>
</dbReference>
<dbReference type="InterPro" id="IPR036823">
    <property type="entry name" value="Ribosomal_uS7_dom_sf"/>
</dbReference>
<dbReference type="NCBIfam" id="TIGR01029">
    <property type="entry name" value="rpsG_bact"/>
    <property type="match status" value="1"/>
</dbReference>
<dbReference type="PANTHER" id="PTHR11205">
    <property type="entry name" value="RIBOSOMAL PROTEIN S7"/>
    <property type="match status" value="1"/>
</dbReference>
<dbReference type="Pfam" id="PF00177">
    <property type="entry name" value="Ribosomal_S7"/>
    <property type="match status" value="1"/>
</dbReference>
<dbReference type="PIRSF" id="PIRSF002122">
    <property type="entry name" value="RPS7p_RPS7a_RPS5e_RPS7o"/>
    <property type="match status" value="1"/>
</dbReference>
<dbReference type="SUPFAM" id="SSF47973">
    <property type="entry name" value="Ribosomal protein S7"/>
    <property type="match status" value="1"/>
</dbReference>
<dbReference type="PROSITE" id="PS00052">
    <property type="entry name" value="RIBOSOMAL_S7"/>
    <property type="match status" value="1"/>
</dbReference>
<protein>
    <recommendedName>
        <fullName evidence="1">Small ribosomal subunit protein uS7</fullName>
    </recommendedName>
    <alternativeName>
        <fullName evidence="2">30S ribosomal protein S7</fullName>
    </alternativeName>
</protein>
<comment type="function">
    <text evidence="1">One of the primary rRNA binding proteins, it binds directly to 16S rRNA where it nucleates assembly of the head domain of the 30S subunit. Is located at the subunit interface close to the decoding center, probably blocks exit of the E-site tRNA.</text>
</comment>
<comment type="subunit">
    <text evidence="1">Part of the 30S ribosomal subunit. Contacts proteins S9 and S11.</text>
</comment>
<comment type="similarity">
    <text evidence="1">Belongs to the universal ribosomal protein uS7 family.</text>
</comment>
<gene>
    <name evidence="1" type="primary">rpsG</name>
    <name type="ordered locus">VV1_1337</name>
</gene>
<feature type="chain" id="PRO_0000124379" description="Small ribosomal subunit protein uS7">
    <location>
        <begin position="1"/>
        <end position="156"/>
    </location>
</feature>
<organism>
    <name type="scientific">Vibrio vulnificus (strain CMCP6)</name>
    <dbReference type="NCBI Taxonomy" id="216895"/>
    <lineage>
        <taxon>Bacteria</taxon>
        <taxon>Pseudomonadati</taxon>
        <taxon>Pseudomonadota</taxon>
        <taxon>Gammaproteobacteria</taxon>
        <taxon>Vibrionales</taxon>
        <taxon>Vibrionaceae</taxon>
        <taxon>Vibrio</taxon>
    </lineage>
</organism>
<accession>Q8DCQ9</accession>
<sequence length="156" mass="17687">MPRRRVIGQRKILPDPKFKSELLAKFVNILMVDGKKSVAEKIVYTALDTMAEKSGKDHLAVFEEALENVRPAVEVKSRRVGGSTYQVPVEVRPVRRNALAMRWLVEAARKRGEKSMAARLAAEMLDASDNKGTAVKKREDVHRMAEANKAFAHYRW</sequence>